<reference key="1">
    <citation type="journal article" date="2006" name="Nature">
        <title>Global trends of whole-genome duplications revealed by the ciliate Paramecium tetraurelia.</title>
        <authorList>
            <person name="Aury J.-M."/>
            <person name="Jaillon O."/>
            <person name="Duret L."/>
            <person name="Noel B."/>
            <person name="Jubin C."/>
            <person name="Porcel B.M."/>
            <person name="Segurens B."/>
            <person name="Daubin V."/>
            <person name="Anthouard V."/>
            <person name="Aiach N."/>
            <person name="Arnaiz O."/>
            <person name="Billaut A."/>
            <person name="Beisson J."/>
            <person name="Blanc I."/>
            <person name="Bouhouche K."/>
            <person name="Camara F."/>
            <person name="Duharcourt S."/>
            <person name="Guigo R."/>
            <person name="Gogendeau D."/>
            <person name="Katinka M."/>
            <person name="Keller A.-M."/>
            <person name="Kissmehl R."/>
            <person name="Klotz C."/>
            <person name="Koll F."/>
            <person name="Le Mouel A."/>
            <person name="Lepere G."/>
            <person name="Malinsky S."/>
            <person name="Nowacki M."/>
            <person name="Nowak J.K."/>
            <person name="Plattner H."/>
            <person name="Poulain J."/>
            <person name="Ruiz F."/>
            <person name="Serrano V."/>
            <person name="Zagulski M."/>
            <person name="Dessen P."/>
            <person name="Betermier M."/>
            <person name="Weissenbach J."/>
            <person name="Scarpelli C."/>
            <person name="Schaechter V."/>
            <person name="Sperling L."/>
            <person name="Meyer E."/>
            <person name="Cohen J."/>
            <person name="Wincker P."/>
        </authorList>
    </citation>
    <scope>NUCLEOTIDE SEQUENCE [LARGE SCALE GENOMIC DNA]</scope>
    <source>
        <strain>Stock d4-2</strain>
    </source>
</reference>
<organism>
    <name type="scientific">Paramecium tetraurelia</name>
    <dbReference type="NCBI Taxonomy" id="5888"/>
    <lineage>
        <taxon>Eukaryota</taxon>
        <taxon>Sar</taxon>
        <taxon>Alveolata</taxon>
        <taxon>Ciliophora</taxon>
        <taxon>Intramacronucleata</taxon>
        <taxon>Oligohymenophorea</taxon>
        <taxon>Peniculida</taxon>
        <taxon>Parameciidae</taxon>
        <taxon>Paramecium</taxon>
    </lineage>
</organism>
<keyword id="KW-0378">Hydrolase</keyword>
<keyword id="KW-0464">Manganese</keyword>
<keyword id="KW-0479">Metal-binding</keyword>
<keyword id="KW-0488">Methylation</keyword>
<keyword id="KW-0904">Protein phosphatase</keyword>
<keyword id="KW-1185">Reference proteome</keyword>
<accession>A0CNL9</accession>
<evidence type="ECO:0000250" key="1"/>
<evidence type="ECO:0000256" key="2">
    <source>
        <dbReference type="SAM" id="MobiDB-lite"/>
    </source>
</evidence>
<evidence type="ECO:0000305" key="3"/>
<feature type="chain" id="PRO_0000307835" description="Serine/threonine-protein phosphatase PP2A catalytic subunit 2">
    <location>
        <begin position="1"/>
        <end position="315"/>
    </location>
</feature>
<feature type="region of interest" description="Disordered" evidence="2">
    <location>
        <begin position="294"/>
        <end position="315"/>
    </location>
</feature>
<feature type="compositionally biased region" description="Basic and acidic residues" evidence="2">
    <location>
        <begin position="298"/>
        <end position="315"/>
    </location>
</feature>
<feature type="active site" description="Proton donor" evidence="1">
    <location>
        <position position="123"/>
    </location>
</feature>
<feature type="binding site" evidence="1">
    <location>
        <position position="62"/>
    </location>
    <ligand>
        <name>Mn(2+)</name>
        <dbReference type="ChEBI" id="CHEBI:29035"/>
        <label>1</label>
    </ligand>
</feature>
<feature type="binding site" evidence="1">
    <location>
        <position position="64"/>
    </location>
    <ligand>
        <name>Mn(2+)</name>
        <dbReference type="ChEBI" id="CHEBI:29035"/>
        <label>1</label>
    </ligand>
</feature>
<feature type="binding site" evidence="1">
    <location>
        <position position="90"/>
    </location>
    <ligand>
        <name>Mn(2+)</name>
        <dbReference type="ChEBI" id="CHEBI:29035"/>
        <label>1</label>
    </ligand>
</feature>
<feature type="binding site" evidence="1">
    <location>
        <position position="90"/>
    </location>
    <ligand>
        <name>Mn(2+)</name>
        <dbReference type="ChEBI" id="CHEBI:29035"/>
        <label>2</label>
    </ligand>
</feature>
<feature type="binding site" evidence="1">
    <location>
        <position position="122"/>
    </location>
    <ligand>
        <name>Mn(2+)</name>
        <dbReference type="ChEBI" id="CHEBI:29035"/>
        <label>2</label>
    </ligand>
</feature>
<feature type="binding site" evidence="1">
    <location>
        <position position="172"/>
    </location>
    <ligand>
        <name>Mn(2+)</name>
        <dbReference type="ChEBI" id="CHEBI:29035"/>
        <label>2</label>
    </ligand>
</feature>
<feature type="binding site" evidence="1">
    <location>
        <position position="247"/>
    </location>
    <ligand>
        <name>Mn(2+)</name>
        <dbReference type="ChEBI" id="CHEBI:29035"/>
        <label>2</label>
    </ligand>
</feature>
<feature type="modified residue" description="Leucine methyl ester" evidence="1">
    <location>
        <position position="315"/>
    </location>
</feature>
<name>PP2A2_PARTE</name>
<proteinExistence type="inferred from homology"/>
<gene>
    <name type="primary">Ppn2</name>
    <name type="ORF">GSPATT00008828001</name>
</gene>
<sequence length="315" mass="36176">MASLNKLSSNEIGNIDRQIAKLRQGQILTEQEVKSLCIKAKEILQDEPNIIQVRAPLTICGDIHGQFHDLIELFQIGGNLPDTNYLFLGDYVDRGSQSVETFSLMLSLKVRYKDRIVLLRGNHENREINKIYGFYDECFRKYGNEIVWKQFTEVFGYLPLSAIVEQQIFCAHGGLSPAMESVDQIKQLNRVQDIPHEGLMCDLLWSDPEETKNGWGISPRGAGWTWGCDITEKFLHSNKLKQIARAHQLVMEGIQKVHNQKTITIFSAPNYCYRCGNQACIVEVDEQLKMNQTQFEPAPRENEPHTTRRVPDYFL</sequence>
<comment type="catalytic activity">
    <reaction>
        <text>O-phospho-L-seryl-[protein] + H2O = L-seryl-[protein] + phosphate</text>
        <dbReference type="Rhea" id="RHEA:20629"/>
        <dbReference type="Rhea" id="RHEA-COMP:9863"/>
        <dbReference type="Rhea" id="RHEA-COMP:11604"/>
        <dbReference type="ChEBI" id="CHEBI:15377"/>
        <dbReference type="ChEBI" id="CHEBI:29999"/>
        <dbReference type="ChEBI" id="CHEBI:43474"/>
        <dbReference type="ChEBI" id="CHEBI:83421"/>
        <dbReference type="EC" id="3.1.3.16"/>
    </reaction>
</comment>
<comment type="catalytic activity">
    <reaction>
        <text>O-phospho-L-threonyl-[protein] + H2O = L-threonyl-[protein] + phosphate</text>
        <dbReference type="Rhea" id="RHEA:47004"/>
        <dbReference type="Rhea" id="RHEA-COMP:11060"/>
        <dbReference type="Rhea" id="RHEA-COMP:11605"/>
        <dbReference type="ChEBI" id="CHEBI:15377"/>
        <dbReference type="ChEBI" id="CHEBI:30013"/>
        <dbReference type="ChEBI" id="CHEBI:43474"/>
        <dbReference type="ChEBI" id="CHEBI:61977"/>
        <dbReference type="EC" id="3.1.3.16"/>
    </reaction>
</comment>
<comment type="cofactor">
    <cofactor evidence="1">
        <name>Mn(2+)</name>
        <dbReference type="ChEBI" id="CHEBI:29035"/>
    </cofactor>
    <text evidence="1">Binds 2 manganese ions per subunit.</text>
</comment>
<comment type="PTM">
    <text>Reversibly methyl esterified on Leu-315 by leucine carboxyl methyltransferase 1 (PPM1) and protein phosphatase methylesterase 1 (PPE1). Carboxyl methylation influences the affinity of the catalytic subunit for the different regulatory subunits, thereby modulating the PP2A holoenzyme's substrate specificity, enzyme activity and cellular localization.</text>
</comment>
<comment type="similarity">
    <text evidence="3">Belongs to the PPP phosphatase family. PP-2A subfamily.</text>
</comment>
<protein>
    <recommendedName>
        <fullName>Serine/threonine-protein phosphatase PP2A catalytic subunit 2</fullName>
        <shortName>PPN 2</shortName>
        <ecNumber>3.1.3.16</ecNumber>
    </recommendedName>
</protein>
<dbReference type="EC" id="3.1.3.16"/>
<dbReference type="EMBL" id="CT868119">
    <property type="protein sequence ID" value="CAK72386.1"/>
    <property type="molecule type" value="Genomic_DNA"/>
</dbReference>
<dbReference type="RefSeq" id="XP_001439783.1">
    <property type="nucleotide sequence ID" value="XM_001439746.1"/>
</dbReference>
<dbReference type="SMR" id="A0CNL9"/>
<dbReference type="STRING" id="5888.A0CNL9"/>
<dbReference type="EnsemblProtists" id="CAK72386">
    <property type="protein sequence ID" value="CAK72386"/>
    <property type="gene ID" value="GSPATT00008828001"/>
</dbReference>
<dbReference type="GeneID" id="5025568"/>
<dbReference type="KEGG" id="ptm:GSPATT00008828001"/>
<dbReference type="eggNOG" id="KOG0371">
    <property type="taxonomic scope" value="Eukaryota"/>
</dbReference>
<dbReference type="HOGENOM" id="CLU_004962_8_1_1"/>
<dbReference type="InParanoid" id="A0CNL9"/>
<dbReference type="OMA" id="ICEPNIK"/>
<dbReference type="OrthoDB" id="282434at2759"/>
<dbReference type="Proteomes" id="UP000000600">
    <property type="component" value="Partially assembled WGS sequence"/>
</dbReference>
<dbReference type="GO" id="GO:0005829">
    <property type="term" value="C:cytosol"/>
    <property type="evidence" value="ECO:0000318"/>
    <property type="project" value="GO_Central"/>
</dbReference>
<dbReference type="GO" id="GO:0005634">
    <property type="term" value="C:nucleus"/>
    <property type="evidence" value="ECO:0000318"/>
    <property type="project" value="GO_Central"/>
</dbReference>
<dbReference type="GO" id="GO:0046872">
    <property type="term" value="F:metal ion binding"/>
    <property type="evidence" value="ECO:0007669"/>
    <property type="project" value="UniProtKB-KW"/>
</dbReference>
<dbReference type="GO" id="GO:0004722">
    <property type="term" value="F:protein serine/threonine phosphatase activity"/>
    <property type="evidence" value="ECO:0000318"/>
    <property type="project" value="GO_Central"/>
</dbReference>
<dbReference type="GO" id="GO:0000278">
    <property type="term" value="P:mitotic cell cycle"/>
    <property type="evidence" value="ECO:0000318"/>
    <property type="project" value="GO_Central"/>
</dbReference>
<dbReference type="CDD" id="cd07415">
    <property type="entry name" value="MPP_PP2A_PP4_PP6"/>
    <property type="match status" value="1"/>
</dbReference>
<dbReference type="Gene3D" id="3.60.21.10">
    <property type="match status" value="1"/>
</dbReference>
<dbReference type="InterPro" id="IPR004843">
    <property type="entry name" value="Calcineurin-like_PHP_ApaH"/>
</dbReference>
<dbReference type="InterPro" id="IPR029052">
    <property type="entry name" value="Metallo-depent_PP-like"/>
</dbReference>
<dbReference type="InterPro" id="IPR047129">
    <property type="entry name" value="PPA2-like"/>
</dbReference>
<dbReference type="InterPro" id="IPR006186">
    <property type="entry name" value="Ser/Thr-sp_prot-phosphatase"/>
</dbReference>
<dbReference type="PANTHER" id="PTHR45619">
    <property type="entry name" value="SERINE/THREONINE-PROTEIN PHOSPHATASE PP2A-RELATED"/>
    <property type="match status" value="1"/>
</dbReference>
<dbReference type="Pfam" id="PF00149">
    <property type="entry name" value="Metallophos"/>
    <property type="match status" value="1"/>
</dbReference>
<dbReference type="PRINTS" id="PR00114">
    <property type="entry name" value="STPHPHTASE"/>
</dbReference>
<dbReference type="SMART" id="SM00156">
    <property type="entry name" value="PP2Ac"/>
    <property type="match status" value="1"/>
</dbReference>
<dbReference type="SUPFAM" id="SSF56300">
    <property type="entry name" value="Metallo-dependent phosphatases"/>
    <property type="match status" value="1"/>
</dbReference>
<dbReference type="PROSITE" id="PS00125">
    <property type="entry name" value="SER_THR_PHOSPHATASE"/>
    <property type="match status" value="1"/>
</dbReference>